<dbReference type="EC" id="5.4.2.4" evidence="7"/>
<dbReference type="EC" id="5.4.2.11" evidence="7"/>
<dbReference type="EMBL" id="X04327">
    <property type="protein sequence ID" value="CAA27858.1"/>
    <property type="molecule type" value="mRNA"/>
</dbReference>
<dbReference type="EMBL" id="M23068">
    <property type="protein sequence ID" value="AAA51840.1"/>
    <property type="molecule type" value="Genomic_DNA"/>
</dbReference>
<dbReference type="EMBL" id="M23067">
    <property type="protein sequence ID" value="AAA51840.1"/>
    <property type="status" value="JOINED"/>
    <property type="molecule type" value="Genomic_DNA"/>
</dbReference>
<dbReference type="EMBL" id="AK315439">
    <property type="protein sequence ID" value="BAG37827.1"/>
    <property type="molecule type" value="mRNA"/>
</dbReference>
<dbReference type="EMBL" id="CH236950">
    <property type="protein sequence ID" value="EAL24067.1"/>
    <property type="molecule type" value="Genomic_DNA"/>
</dbReference>
<dbReference type="EMBL" id="CH471070">
    <property type="protein sequence ID" value="EAW83821.1"/>
    <property type="molecule type" value="Genomic_DNA"/>
</dbReference>
<dbReference type="EMBL" id="BC017050">
    <property type="protein sequence ID" value="AAH17050.1"/>
    <property type="molecule type" value="mRNA"/>
</dbReference>
<dbReference type="CCDS" id="CCDS5833.1"/>
<dbReference type="PIR" id="A31999">
    <property type="entry name" value="PMHUBM"/>
</dbReference>
<dbReference type="RefSeq" id="NP_001280014.1">
    <property type="nucleotide sequence ID" value="NM_001293085.2"/>
</dbReference>
<dbReference type="RefSeq" id="NP_001715.1">
    <property type="nucleotide sequence ID" value="NM_001724.5"/>
</dbReference>
<dbReference type="RefSeq" id="NP_954655.1">
    <property type="nucleotide sequence ID" value="NM_199186.3"/>
</dbReference>
<dbReference type="RefSeq" id="XP_011514829.1">
    <property type="nucleotide sequence ID" value="XM_011516527.3"/>
</dbReference>
<dbReference type="RefSeq" id="XP_047276717.1">
    <property type="nucleotide sequence ID" value="XM_047420761.1"/>
</dbReference>
<dbReference type="RefSeq" id="XP_054214843.1">
    <property type="nucleotide sequence ID" value="XM_054358868.1"/>
</dbReference>
<dbReference type="RefSeq" id="XP_054214844.1">
    <property type="nucleotide sequence ID" value="XM_054358869.1"/>
</dbReference>
<dbReference type="PDB" id="1T8P">
    <property type="method" value="X-ray"/>
    <property type="resolution" value="2.50 A"/>
    <property type="chains" value="A/B=1-259"/>
</dbReference>
<dbReference type="PDB" id="2A9J">
    <property type="method" value="X-ray"/>
    <property type="resolution" value="2.00 A"/>
    <property type="chains" value="A/B=1-259"/>
</dbReference>
<dbReference type="PDB" id="2F90">
    <property type="method" value="X-ray"/>
    <property type="resolution" value="2.00 A"/>
    <property type="chains" value="A/B=1-259"/>
</dbReference>
<dbReference type="PDB" id="2H4X">
    <property type="method" value="X-ray"/>
    <property type="resolution" value="1.85 A"/>
    <property type="chains" value="A/B=1-259"/>
</dbReference>
<dbReference type="PDB" id="2H4Z">
    <property type="method" value="X-ray"/>
    <property type="resolution" value="2.00 A"/>
    <property type="chains" value="A/B=1-259"/>
</dbReference>
<dbReference type="PDB" id="2H52">
    <property type="method" value="X-ray"/>
    <property type="resolution" value="2.00 A"/>
    <property type="chains" value="A/B=1-259"/>
</dbReference>
<dbReference type="PDB" id="2HHJ">
    <property type="method" value="X-ray"/>
    <property type="resolution" value="1.50 A"/>
    <property type="chains" value="A/B=1-259"/>
</dbReference>
<dbReference type="PDB" id="3NFY">
    <property type="method" value="X-ray"/>
    <property type="resolution" value="1.94 A"/>
    <property type="chains" value="A/B=1-259"/>
</dbReference>
<dbReference type="PDB" id="7N3R">
    <property type="method" value="X-ray"/>
    <property type="resolution" value="2.25 A"/>
    <property type="chains" value="A/B=1-259"/>
</dbReference>
<dbReference type="PDB" id="7N3S">
    <property type="method" value="X-ray"/>
    <property type="resolution" value="2.48 A"/>
    <property type="chains" value="A/B=1-259"/>
</dbReference>
<dbReference type="PDB" id="7THI">
    <property type="method" value="X-ray"/>
    <property type="resolution" value="1.33 A"/>
    <property type="chains" value="A/B=1-259"/>
</dbReference>
<dbReference type="PDB" id="8X2S">
    <property type="method" value="X-ray"/>
    <property type="resolution" value="1.90 A"/>
    <property type="chains" value="A/B=1-259"/>
</dbReference>
<dbReference type="PDBsum" id="1T8P"/>
<dbReference type="PDBsum" id="2A9J"/>
<dbReference type="PDBsum" id="2F90"/>
<dbReference type="PDBsum" id="2H4X"/>
<dbReference type="PDBsum" id="2H4Z"/>
<dbReference type="PDBsum" id="2H52"/>
<dbReference type="PDBsum" id="2HHJ"/>
<dbReference type="PDBsum" id="3NFY"/>
<dbReference type="PDBsum" id="7N3R"/>
<dbReference type="PDBsum" id="7N3S"/>
<dbReference type="PDBsum" id="7THI"/>
<dbReference type="PDBsum" id="8X2S"/>
<dbReference type="SMR" id="P07738"/>
<dbReference type="BioGRID" id="107137">
    <property type="interactions" value="29"/>
</dbReference>
<dbReference type="FunCoup" id="P07738">
    <property type="interactions" value="349"/>
</dbReference>
<dbReference type="IntAct" id="P07738">
    <property type="interactions" value="25"/>
</dbReference>
<dbReference type="STRING" id="9606.ENSP00000376840"/>
<dbReference type="BindingDB" id="P07738"/>
<dbReference type="ChEMBL" id="CHEMBL5169112"/>
<dbReference type="DEPOD" id="BPGM"/>
<dbReference type="GlyCosmos" id="P07738">
    <property type="glycosylation" value="6 sites, No reported glycans"/>
</dbReference>
<dbReference type="GlyGen" id="P07738">
    <property type="glycosylation" value="1 site"/>
</dbReference>
<dbReference type="iPTMnet" id="P07738"/>
<dbReference type="MetOSite" id="P07738"/>
<dbReference type="PhosphoSitePlus" id="P07738"/>
<dbReference type="BioMuta" id="BPGM"/>
<dbReference type="DMDM" id="130350"/>
<dbReference type="REPRODUCTION-2DPAGE" id="IPI00215979"/>
<dbReference type="jPOST" id="P07738"/>
<dbReference type="MassIVE" id="P07738"/>
<dbReference type="PaxDb" id="9606-ENSP00000376840"/>
<dbReference type="PeptideAtlas" id="P07738"/>
<dbReference type="ProteomicsDB" id="52025"/>
<dbReference type="Pumba" id="P07738"/>
<dbReference type="Antibodypedia" id="2975">
    <property type="antibodies" value="260 antibodies from 28 providers"/>
</dbReference>
<dbReference type="DNASU" id="669"/>
<dbReference type="Ensembl" id="ENST00000344924.8">
    <property type="protein sequence ID" value="ENSP00000342032.3"/>
    <property type="gene ID" value="ENSG00000172331.12"/>
</dbReference>
<dbReference type="Ensembl" id="ENST00000393132.2">
    <property type="protein sequence ID" value="ENSP00000376840.2"/>
    <property type="gene ID" value="ENSG00000172331.12"/>
</dbReference>
<dbReference type="Ensembl" id="ENST00000418040.5">
    <property type="protein sequence ID" value="ENSP00000399838.1"/>
    <property type="gene ID" value="ENSG00000172331.12"/>
</dbReference>
<dbReference type="GeneID" id="669"/>
<dbReference type="KEGG" id="hsa:669"/>
<dbReference type="MANE-Select" id="ENST00000344924.8">
    <property type="protein sequence ID" value="ENSP00000342032.3"/>
    <property type="RefSeq nucleotide sequence ID" value="NM_001724.5"/>
    <property type="RefSeq protein sequence ID" value="NP_001715.1"/>
</dbReference>
<dbReference type="UCSC" id="uc003vrv.4">
    <property type="organism name" value="human"/>
</dbReference>
<dbReference type="AGR" id="HGNC:1093"/>
<dbReference type="CTD" id="669"/>
<dbReference type="DisGeNET" id="669"/>
<dbReference type="GeneCards" id="BPGM"/>
<dbReference type="HGNC" id="HGNC:1093">
    <property type="gene designation" value="BPGM"/>
</dbReference>
<dbReference type="HPA" id="ENSG00000172331">
    <property type="expression patterns" value="Tissue enhanced (bone)"/>
</dbReference>
<dbReference type="MalaCards" id="BPGM"/>
<dbReference type="MIM" id="222800">
    <property type="type" value="phenotype"/>
</dbReference>
<dbReference type="MIM" id="613896">
    <property type="type" value="gene"/>
</dbReference>
<dbReference type="neXtProt" id="NX_P07738"/>
<dbReference type="OpenTargets" id="ENSG00000172331"/>
<dbReference type="Orphanet" id="247378">
    <property type="disease" value="Autosomal recessive secondary polycythemia not associated with VHL gene"/>
</dbReference>
<dbReference type="Orphanet" id="714">
    <property type="disease" value="Hemolytic anemia due to diphosphoglycerate mutase deficiency"/>
</dbReference>
<dbReference type="PharmGKB" id="PA25401"/>
<dbReference type="VEuPathDB" id="HostDB:ENSG00000172331"/>
<dbReference type="eggNOG" id="KOG0235">
    <property type="taxonomic scope" value="Eukaryota"/>
</dbReference>
<dbReference type="GeneTree" id="ENSGT00950000182926"/>
<dbReference type="HOGENOM" id="CLU_033323_1_1_1"/>
<dbReference type="InParanoid" id="P07738"/>
<dbReference type="OMA" id="TGWHDVP"/>
<dbReference type="OrthoDB" id="354304at2759"/>
<dbReference type="PAN-GO" id="P07738">
    <property type="GO annotations" value="0 GO annotations based on evolutionary models"/>
</dbReference>
<dbReference type="PhylomeDB" id="P07738"/>
<dbReference type="TreeFam" id="TF300007"/>
<dbReference type="BioCyc" id="MetaCyc:HS10491-MONOMER"/>
<dbReference type="BRENDA" id="5.4.2.4">
    <property type="organism ID" value="2681"/>
</dbReference>
<dbReference type="PathwayCommons" id="P07738"/>
<dbReference type="Reactome" id="R-HSA-70171">
    <property type="pathway name" value="Glycolysis"/>
</dbReference>
<dbReference type="SABIO-RK" id="P07738"/>
<dbReference type="SignaLink" id="P07738"/>
<dbReference type="BioGRID-ORCS" id="669">
    <property type="hits" value="17 hits in 1175 CRISPR screens"/>
</dbReference>
<dbReference type="ChiTaRS" id="BPGM">
    <property type="organism name" value="human"/>
</dbReference>
<dbReference type="EvolutionaryTrace" id="P07738"/>
<dbReference type="GenomeRNAi" id="669"/>
<dbReference type="Pharos" id="P07738">
    <property type="development level" value="Tbio"/>
</dbReference>
<dbReference type="PRO" id="PR:P07738"/>
<dbReference type="Proteomes" id="UP000005640">
    <property type="component" value="Chromosome 7"/>
</dbReference>
<dbReference type="RNAct" id="P07738">
    <property type="molecule type" value="protein"/>
</dbReference>
<dbReference type="Bgee" id="ENSG00000172331">
    <property type="expression patterns" value="Expressed in secondary oocyte and 197 other cell types or tissues"/>
</dbReference>
<dbReference type="ExpressionAtlas" id="P07738">
    <property type="expression patterns" value="baseline and differential"/>
</dbReference>
<dbReference type="GO" id="GO:0005829">
    <property type="term" value="C:cytosol"/>
    <property type="evidence" value="ECO:0000304"/>
    <property type="project" value="Reactome"/>
</dbReference>
<dbReference type="GO" id="GO:0070062">
    <property type="term" value="C:extracellular exosome"/>
    <property type="evidence" value="ECO:0007005"/>
    <property type="project" value="UniProtKB"/>
</dbReference>
<dbReference type="GO" id="GO:0004082">
    <property type="term" value="F:bisphosphoglycerate mutase activity"/>
    <property type="evidence" value="ECO:0000304"/>
    <property type="project" value="Reactome"/>
</dbReference>
<dbReference type="GO" id="GO:0016787">
    <property type="term" value="F:hydrolase activity"/>
    <property type="evidence" value="ECO:0007669"/>
    <property type="project" value="UniProtKB-KW"/>
</dbReference>
<dbReference type="GO" id="GO:0004619">
    <property type="term" value="F:phosphoglycerate mutase activity"/>
    <property type="evidence" value="ECO:0007669"/>
    <property type="project" value="UniProtKB-EC"/>
</dbReference>
<dbReference type="GO" id="GO:1901136">
    <property type="term" value="P:carbohydrate derivative catabolic process"/>
    <property type="evidence" value="ECO:0000304"/>
    <property type="project" value="Reactome"/>
</dbReference>
<dbReference type="GO" id="GO:0005975">
    <property type="term" value="P:carbohydrate metabolic process"/>
    <property type="evidence" value="ECO:0000303"/>
    <property type="project" value="ProtInc"/>
</dbReference>
<dbReference type="GO" id="GO:0033554">
    <property type="term" value="P:cellular response to stress"/>
    <property type="evidence" value="ECO:0007669"/>
    <property type="project" value="Ensembl"/>
</dbReference>
<dbReference type="GO" id="GO:0042832">
    <property type="term" value="P:defense response to protozoan"/>
    <property type="evidence" value="ECO:0007669"/>
    <property type="project" value="Ensembl"/>
</dbReference>
<dbReference type="GO" id="GO:0048821">
    <property type="term" value="P:erythrocyte development"/>
    <property type="evidence" value="ECO:0007669"/>
    <property type="project" value="Ensembl"/>
</dbReference>
<dbReference type="GO" id="GO:0060856">
    <property type="term" value="P:establishment of blood-brain barrier"/>
    <property type="evidence" value="ECO:0007669"/>
    <property type="project" value="Ensembl"/>
</dbReference>
<dbReference type="GO" id="GO:0006096">
    <property type="term" value="P:glycolytic process"/>
    <property type="evidence" value="ECO:0007669"/>
    <property type="project" value="UniProtKB-KW"/>
</dbReference>
<dbReference type="GO" id="GO:0150076">
    <property type="term" value="P:neuroinflammatory response"/>
    <property type="evidence" value="ECO:0007669"/>
    <property type="project" value="Ensembl"/>
</dbReference>
<dbReference type="GO" id="GO:0015671">
    <property type="term" value="P:oxygen transport"/>
    <property type="evidence" value="ECO:0007669"/>
    <property type="project" value="Ensembl"/>
</dbReference>
<dbReference type="GO" id="GO:0007585">
    <property type="term" value="P:respiratory gaseous exchange by respiratory system"/>
    <property type="evidence" value="ECO:0000304"/>
    <property type="project" value="ProtInc"/>
</dbReference>
<dbReference type="CDD" id="cd07067">
    <property type="entry name" value="HP_PGM_like"/>
    <property type="match status" value="1"/>
</dbReference>
<dbReference type="FunFam" id="3.40.50.1240:FF:000012">
    <property type="entry name" value="Phosphoglycerate mutase 1"/>
    <property type="match status" value="1"/>
</dbReference>
<dbReference type="Gene3D" id="3.40.50.1240">
    <property type="entry name" value="Phosphoglycerate mutase-like"/>
    <property type="match status" value="1"/>
</dbReference>
<dbReference type="HAMAP" id="MF_01039">
    <property type="entry name" value="PGAM_GpmA"/>
    <property type="match status" value="1"/>
</dbReference>
<dbReference type="InterPro" id="IPR013078">
    <property type="entry name" value="His_Pase_superF_clade-1"/>
</dbReference>
<dbReference type="InterPro" id="IPR029033">
    <property type="entry name" value="His_PPase_superfam"/>
</dbReference>
<dbReference type="InterPro" id="IPR001345">
    <property type="entry name" value="PG/BPGM_mutase_AS"/>
</dbReference>
<dbReference type="InterPro" id="IPR005952">
    <property type="entry name" value="Phosphogly_mut1"/>
</dbReference>
<dbReference type="NCBIfam" id="TIGR01258">
    <property type="entry name" value="pgm_1"/>
    <property type="match status" value="1"/>
</dbReference>
<dbReference type="NCBIfam" id="NF010713">
    <property type="entry name" value="PRK14115.1"/>
    <property type="match status" value="1"/>
</dbReference>
<dbReference type="PANTHER" id="PTHR11931">
    <property type="entry name" value="PHOSPHOGLYCERATE MUTASE"/>
    <property type="match status" value="1"/>
</dbReference>
<dbReference type="Pfam" id="PF00300">
    <property type="entry name" value="His_Phos_1"/>
    <property type="match status" value="2"/>
</dbReference>
<dbReference type="PIRSF" id="PIRSF000709">
    <property type="entry name" value="6PFK_2-Ptase"/>
    <property type="match status" value="1"/>
</dbReference>
<dbReference type="SMART" id="SM00855">
    <property type="entry name" value="PGAM"/>
    <property type="match status" value="1"/>
</dbReference>
<dbReference type="SUPFAM" id="SSF53254">
    <property type="entry name" value="Phosphoglycerate mutase-like"/>
    <property type="match status" value="1"/>
</dbReference>
<dbReference type="PROSITE" id="PS00175">
    <property type="entry name" value="PG_MUTASE"/>
    <property type="match status" value="1"/>
</dbReference>
<accession>P07738</accession>
<accession>A4D1N9</accession>
<comment type="function">
    <text evidence="7">Plays a major role in regulating hemoglobin oxygen affinity by controlling the levels of its allosteric effector 2,3-bisphosphoglycerate (2,3-BPG). Also exhibits mutase (EC 5.4.2.11) activity.</text>
</comment>
<comment type="catalytic activity">
    <reaction evidence="7">
        <text>(2R)-3-phospho-glyceroyl phosphate = (2R)-2,3-bisphosphoglycerate + H(+)</text>
        <dbReference type="Rhea" id="RHEA:17765"/>
        <dbReference type="ChEBI" id="CHEBI:15378"/>
        <dbReference type="ChEBI" id="CHEBI:57604"/>
        <dbReference type="ChEBI" id="CHEBI:58248"/>
        <dbReference type="EC" id="5.4.2.4"/>
    </reaction>
</comment>
<comment type="catalytic activity">
    <reaction evidence="7">
        <text>(2R)-2-phosphoglycerate = (2R)-3-phosphoglycerate</text>
        <dbReference type="Rhea" id="RHEA:15901"/>
        <dbReference type="ChEBI" id="CHEBI:58272"/>
        <dbReference type="ChEBI" id="CHEBI:58289"/>
        <dbReference type="EC" id="5.4.2.11"/>
    </reaction>
</comment>
<comment type="activity regulation">
    <text evidence="1 7">At alkaline pH BPGM favors the synthase reaction; however, at lower pH the phosphatase reaction is dominant. Inhibited by citrate.</text>
</comment>
<comment type="subunit">
    <text evidence="4 6">Homodimer.</text>
</comment>
<comment type="interaction">
    <interactant intactId="EBI-2115835">
        <id>P07738</id>
    </interactant>
    <interactant intactId="EBI-2511669">
        <id>P15259</id>
        <label>PGAM2</label>
    </interactant>
    <organismsDiffer>false</organismsDiffer>
    <experiments>6</experiments>
</comment>
<comment type="tissue specificity">
    <text evidence="5 9 10">Expressed in red blood cells. Expressed in non-erythroid cells of the placenta; present in the syncytiotrophoblast layer of the placental villi at the feto-maternal interface (at protein level).</text>
</comment>
<comment type="PTM">
    <text>Glycation of Lys-159 in diabetic patients inactivates the enzyme.</text>
</comment>
<comment type="disease" evidence="2 3 8">
    <disease id="DI-03027">
        <name>Erythrocytosis, familial, 8</name>
        <acronym>ECYT8</acronym>
        <description>An autosomal recessive disorder characterized by elevated serum hemoglobin and hematocrit, and biphosphoglycerate mutase deficiency. ECYT8 affected individuals manifest hemolytic anemia and splenomegaly.</description>
        <dbReference type="MIM" id="222800"/>
    </disease>
    <text>The disease is caused by variants affecting the gene represented in this entry.</text>
</comment>
<comment type="similarity">
    <text evidence="12">Belongs to the phosphoglycerate mutase family. BPG-dependent PGAM subfamily.</text>
</comment>
<gene>
    <name type="primary">BPGM</name>
</gene>
<feature type="initiator methionine" description="Removed" evidence="10 11 13">
    <location>
        <position position="1"/>
    </location>
</feature>
<feature type="chain" id="PRO_0000179834" description="Bisphosphoglycerate mutase">
    <location>
        <begin position="2"/>
        <end position="259"/>
    </location>
</feature>
<feature type="active site" description="Tele-phosphohistidine intermediate" evidence="6">
    <location>
        <position position="11"/>
    </location>
</feature>
<feature type="active site" description="Proton donor/acceptor" evidence="6">
    <location>
        <position position="89"/>
    </location>
</feature>
<feature type="binding site" evidence="6">
    <location>
        <begin position="10"/>
        <end position="17"/>
    </location>
    <ligand>
        <name>substrate</name>
    </ligand>
</feature>
<feature type="binding site" evidence="6">
    <location>
        <begin position="23"/>
        <end position="24"/>
    </location>
    <ligand>
        <name>substrate</name>
    </ligand>
</feature>
<feature type="binding site" evidence="6">
    <location>
        <position position="62"/>
    </location>
    <ligand>
        <name>substrate</name>
    </ligand>
</feature>
<feature type="binding site" evidence="6">
    <location>
        <begin position="89"/>
        <end position="92"/>
    </location>
    <ligand>
        <name>substrate</name>
    </ligand>
</feature>
<feature type="binding site" evidence="6">
    <location>
        <position position="100"/>
    </location>
    <ligand>
        <name>substrate</name>
    </ligand>
</feature>
<feature type="binding site" evidence="6">
    <location>
        <begin position="116"/>
        <end position="117"/>
    </location>
    <ligand>
        <name>substrate</name>
    </ligand>
</feature>
<feature type="binding site" evidence="6">
    <location>
        <begin position="189"/>
        <end position="190"/>
    </location>
    <ligand>
        <name>substrate</name>
    </ligand>
</feature>
<feature type="site" description="Not glycated" evidence="11">
    <location>
        <position position="29"/>
    </location>
</feature>
<feature type="site" description="Not glycated" evidence="11">
    <location>
        <position position="46"/>
    </location>
</feature>
<feature type="site" description="Not glycated" evidence="11">
    <location>
        <position position="143"/>
    </location>
</feature>
<feature type="site" description="Not glycated" evidence="11">
    <location>
        <position position="181"/>
    </location>
</feature>
<feature type="site" description="Transition state stabilizer" evidence="6">
    <location>
        <position position="188"/>
    </location>
</feature>
<feature type="site" description="Not glycated" evidence="11">
    <location>
        <position position="246"/>
    </location>
</feature>
<feature type="site" description="Not glycated" evidence="11">
    <location>
        <position position="247"/>
    </location>
</feature>
<feature type="site" description="Not glycated" evidence="11">
    <location>
        <position position="253"/>
    </location>
</feature>
<feature type="site" description="Not glycated" evidence="11">
    <location>
        <position position="258"/>
    </location>
</feature>
<feature type="site" description="Not glycated" evidence="11">
    <location>
        <position position="259"/>
    </location>
</feature>
<feature type="modified residue" description="N-acetylserine" evidence="13">
    <location>
        <position position="2"/>
    </location>
</feature>
<feature type="modified residue" description="Phosphothreonine" evidence="14">
    <location>
        <position position="122"/>
    </location>
</feature>
<feature type="glycosylation site" description="N-linked (Glc) (glycation) lysine; in vitro" evidence="11">
    <location>
        <position position="3"/>
    </location>
</feature>
<feature type="glycosylation site" description="N-linked (Glc) (glycation) lysine; in vitro" evidence="11">
    <location>
        <position position="5"/>
    </location>
</feature>
<feature type="glycosylation site" description="N-linked (Glc) (glycation) lysine; in vitro" evidence="11">
    <location>
        <position position="18"/>
    </location>
</feature>
<feature type="glycosylation site" description="N-linked (Glc) (glycation) lysine; in vitro" evidence="11">
    <location>
        <position position="43"/>
    </location>
</feature>
<feature type="glycosylation site" description="N-linked (Glc) (glycation) lysine" evidence="11">
    <location>
        <position position="159"/>
    </location>
</feature>
<feature type="glycosylation site" description="N-linked (Glc) (glycation) lysine; in vitro" evidence="11">
    <location>
        <position position="197"/>
    </location>
</feature>
<feature type="sequence variant" id="VAR_065367" description="In ECYT8; dbSNP:rs751972865." evidence="3">
    <original>R</original>
    <variation>Q</variation>
    <location>
        <position position="62"/>
    </location>
</feature>
<feature type="sequence variant" id="VAR_065368" description="In ECYT8; mutation identified at protein level; marked decrease in synthase and mutase activities; no effect on phosphatase activity; dbSNP:rs121964925." evidence="2 8">
    <original>R</original>
    <variation>C</variation>
    <location>
        <position position="90"/>
    </location>
</feature>
<feature type="strand" evidence="15">
    <location>
        <begin position="4"/>
        <end position="10"/>
    </location>
</feature>
<feature type="helix" evidence="15">
    <location>
        <begin position="15"/>
        <end position="19"/>
    </location>
</feature>
<feature type="helix" evidence="15">
    <location>
        <begin position="32"/>
        <end position="47"/>
    </location>
</feature>
<feature type="strand" evidence="15">
    <location>
        <begin position="53"/>
        <end position="57"/>
    </location>
</feature>
<feature type="helix" evidence="15">
    <location>
        <begin position="61"/>
        <end position="74"/>
    </location>
</feature>
<feature type="strand" evidence="15">
    <location>
        <begin position="81"/>
        <end position="83"/>
    </location>
</feature>
<feature type="helix" evidence="15">
    <location>
        <begin position="85"/>
        <end position="87"/>
    </location>
</feature>
<feature type="helix" evidence="15">
    <location>
        <begin position="93"/>
        <end position="95"/>
    </location>
</feature>
<feature type="helix" evidence="15">
    <location>
        <begin position="100"/>
        <end position="107"/>
    </location>
</feature>
<feature type="helix" evidence="15">
    <location>
        <begin position="109"/>
        <end position="117"/>
    </location>
</feature>
<feature type="helix" evidence="15">
    <location>
        <begin position="133"/>
        <end position="137"/>
    </location>
</feature>
<feature type="helix" evidence="15">
    <location>
        <begin position="140"/>
        <end position="142"/>
    </location>
</feature>
<feature type="strand" evidence="15">
    <location>
        <begin position="144"/>
        <end position="147"/>
    </location>
</feature>
<feature type="helix" evidence="15">
    <location>
        <begin position="149"/>
        <end position="151"/>
    </location>
</feature>
<feature type="helix" evidence="15">
    <location>
        <begin position="158"/>
        <end position="171"/>
    </location>
</feature>
<feature type="helix" evidence="15">
    <location>
        <begin position="174"/>
        <end position="178"/>
    </location>
</feature>
<feature type="strand" evidence="15">
    <location>
        <begin position="183"/>
        <end position="187"/>
    </location>
</feature>
<feature type="helix" evidence="15">
    <location>
        <begin position="189"/>
        <end position="200"/>
    </location>
</feature>
<feature type="helix" evidence="15">
    <location>
        <begin position="206"/>
        <end position="209"/>
    </location>
</feature>
<feature type="strand" evidence="16">
    <location>
        <begin position="214"/>
        <end position="216"/>
    </location>
</feature>
<feature type="strand" evidence="15">
    <location>
        <begin position="218"/>
        <end position="222"/>
    </location>
</feature>
<feature type="strand" evidence="15">
    <location>
        <begin position="228"/>
        <end position="231"/>
    </location>
</feature>
<feature type="strand" evidence="15">
    <location>
        <begin position="234"/>
        <end position="236"/>
    </location>
</feature>
<feature type="helix" evidence="15">
    <location>
        <begin position="238"/>
        <end position="250"/>
    </location>
</feature>
<protein>
    <recommendedName>
        <fullName>Bisphosphoglycerate mutase</fullName>
        <shortName>BPGM</shortName>
        <ecNumber evidence="7">5.4.2.4</ecNumber>
    </recommendedName>
    <alternativeName>
        <fullName>2,3-bisphosphoglycerate mutase, erythrocyte</fullName>
    </alternativeName>
    <alternativeName>
        <fullName>2,3-bisphosphoglycerate synthase</fullName>
        <ecNumber evidence="7">5.4.2.11</ecNumber>
    </alternativeName>
    <alternativeName>
        <fullName>2,3-diphosphoglycerate mutase</fullName>
        <shortName>DPGM</shortName>
    </alternativeName>
    <alternativeName>
        <fullName>BPG-dependent PGAM</fullName>
    </alternativeName>
</protein>
<organism>
    <name type="scientific">Homo sapiens</name>
    <name type="common">Human</name>
    <dbReference type="NCBI Taxonomy" id="9606"/>
    <lineage>
        <taxon>Eukaryota</taxon>
        <taxon>Metazoa</taxon>
        <taxon>Chordata</taxon>
        <taxon>Craniata</taxon>
        <taxon>Vertebrata</taxon>
        <taxon>Euteleostomi</taxon>
        <taxon>Mammalia</taxon>
        <taxon>Eutheria</taxon>
        <taxon>Euarchontoglires</taxon>
        <taxon>Primates</taxon>
        <taxon>Haplorrhini</taxon>
        <taxon>Catarrhini</taxon>
        <taxon>Hominidae</taxon>
        <taxon>Homo</taxon>
    </lineage>
</organism>
<evidence type="ECO:0000269" key="1">
    <source>
    </source>
</evidence>
<evidence type="ECO:0000269" key="2">
    <source>
    </source>
</evidence>
<evidence type="ECO:0000269" key="3">
    <source>
    </source>
</evidence>
<evidence type="ECO:0000269" key="4">
    <source>
    </source>
</evidence>
<evidence type="ECO:0000269" key="5">
    <source>
    </source>
</evidence>
<evidence type="ECO:0000269" key="6">
    <source>
    </source>
</evidence>
<evidence type="ECO:0000269" key="7">
    <source>
    </source>
</evidence>
<evidence type="ECO:0000269" key="8">
    <source>
    </source>
</evidence>
<evidence type="ECO:0000269" key="9">
    <source>
    </source>
</evidence>
<evidence type="ECO:0000269" key="10">
    <source>
    </source>
</evidence>
<evidence type="ECO:0000269" key="11">
    <source>
    </source>
</evidence>
<evidence type="ECO:0000305" key="12"/>
<evidence type="ECO:0007744" key="13">
    <source>
    </source>
</evidence>
<evidence type="ECO:0007744" key="14">
    <source>
    </source>
</evidence>
<evidence type="ECO:0007829" key="15">
    <source>
        <dbReference type="PDB" id="7THI"/>
    </source>
</evidence>
<evidence type="ECO:0007829" key="16">
    <source>
        <dbReference type="PDB" id="8X2S"/>
    </source>
</evidence>
<name>PMGE_HUMAN</name>
<reference key="1">
    <citation type="journal article" date="1989" name="J. Biol. Chem.">
        <title>Isolation, characterization, and structure of a mutant 89 ArgTO: bisphosphoglycerate mutase. Implication of the active site in the mutation.</title>
        <authorList>
            <person name="Rosa R."/>
            <person name="Blouquit Y."/>
            <person name="Calvin M.C."/>
            <person name="Prome D."/>
            <person name="Prome J.C."/>
            <person name="Rosa J."/>
        </authorList>
    </citation>
    <scope>PARTIAL PROTEIN SEQUENCE</scope>
    <scope>IDENTIFICATION BY MASS SPECTROMETRY</scope>
    <scope>IDENTIFICATION OF VARIANT ECYT8 CYS-90</scope>
    <scope>CHARACTERIZATION OF VARIANT ECYT8 CYS-90</scope>
    <scope>INVOLVEMENT IN ECYT8</scope>
</reference>
<reference key="2">
    <citation type="journal article" date="1983" name="EMBO J.">
        <title>The complete amino acid sequence of human erythrocyte diphosphoglycerate mutase.</title>
        <authorList>
            <person name="Haggarty N.W."/>
            <person name="Dunbar B."/>
            <person name="Fothergill L.A."/>
        </authorList>
    </citation>
    <scope>PRELIMINARY PROTEIN SEQUENCE OF 2-259</scope>
    <scope>CLEAVAGE OF INITIATOR METHIONINE</scope>
    <scope>TISSUE SPECIFICITY</scope>
</reference>
<reference key="3">
    <citation type="journal article" date="1986" name="EMBO J.">
        <title>Molecular cloning and sequencing of the human erythrocyte 2,3-bisphosphoglycerate mutase cDNA: revised amino acid sequence.</title>
        <authorList>
            <person name="Joulin V."/>
            <person name="Peduzzi J."/>
            <person name="Romeo P.-H."/>
            <person name="Rosa R."/>
            <person name="Valentin C."/>
            <person name="Dubart A."/>
            <person name="Lapeyre B."/>
            <person name="Blouquit Y."/>
            <person name="Garel M.-C."/>
            <person name="Goossens M."/>
            <person name="Rosa J."/>
            <person name="Cohen-Solal M."/>
        </authorList>
    </citation>
    <scope>NUCLEOTIDE SEQUENCE [MRNA]</scope>
    <scope>TISSUE SPECIFICITY</scope>
</reference>
<reference key="4">
    <citation type="journal article" date="1987" name="Biomed. Biochim. Acta">
        <title>Molecular cloning of the human 2,3-bisphosphoglycerate mutase cDNA and revised amino acid sequence.</title>
        <authorList>
            <person name="Cohen-Solal M."/>
            <person name="Joulin V."/>
            <person name="Romeo P.-H."/>
            <person name="Rosa R."/>
            <person name="Valentin C."/>
            <person name="Garel M.-C."/>
            <person name="Rosa J."/>
        </authorList>
    </citation>
    <scope>NUCLEOTIDE SEQUENCE [MRNA]</scope>
</reference>
<reference key="5">
    <citation type="journal article" date="1988" name="J. Biol. Chem.">
        <title>Isolation and characterization of the human 2,3-bisphosphoglycerate mutase gene.</title>
        <authorList>
            <person name="Joulin V."/>
            <person name="Garel M.-C."/>
            <person name="le Boulch P."/>
            <person name="Valentin C."/>
            <person name="Rosa R."/>
            <person name="Rosa J."/>
            <person name="Cohen-Solal M."/>
        </authorList>
    </citation>
    <scope>NUCLEOTIDE SEQUENCE [GENOMIC DNA]</scope>
</reference>
<reference key="6">
    <citation type="journal article" date="2004" name="Nat. Genet.">
        <title>Complete sequencing and characterization of 21,243 full-length human cDNAs.</title>
        <authorList>
            <person name="Ota T."/>
            <person name="Suzuki Y."/>
            <person name="Nishikawa T."/>
            <person name="Otsuki T."/>
            <person name="Sugiyama T."/>
            <person name="Irie R."/>
            <person name="Wakamatsu A."/>
            <person name="Hayashi K."/>
            <person name="Sato H."/>
            <person name="Nagai K."/>
            <person name="Kimura K."/>
            <person name="Makita H."/>
            <person name="Sekine M."/>
            <person name="Obayashi M."/>
            <person name="Nishi T."/>
            <person name="Shibahara T."/>
            <person name="Tanaka T."/>
            <person name="Ishii S."/>
            <person name="Yamamoto J."/>
            <person name="Saito K."/>
            <person name="Kawai Y."/>
            <person name="Isono Y."/>
            <person name="Nakamura Y."/>
            <person name="Nagahari K."/>
            <person name="Murakami K."/>
            <person name="Yasuda T."/>
            <person name="Iwayanagi T."/>
            <person name="Wagatsuma M."/>
            <person name="Shiratori A."/>
            <person name="Sudo H."/>
            <person name="Hosoiri T."/>
            <person name="Kaku Y."/>
            <person name="Kodaira H."/>
            <person name="Kondo H."/>
            <person name="Sugawara M."/>
            <person name="Takahashi M."/>
            <person name="Kanda K."/>
            <person name="Yokoi T."/>
            <person name="Furuya T."/>
            <person name="Kikkawa E."/>
            <person name="Omura Y."/>
            <person name="Abe K."/>
            <person name="Kamihara K."/>
            <person name="Katsuta N."/>
            <person name="Sato K."/>
            <person name="Tanikawa M."/>
            <person name="Yamazaki M."/>
            <person name="Ninomiya K."/>
            <person name="Ishibashi T."/>
            <person name="Yamashita H."/>
            <person name="Murakawa K."/>
            <person name="Fujimori K."/>
            <person name="Tanai H."/>
            <person name="Kimata M."/>
            <person name="Watanabe M."/>
            <person name="Hiraoka S."/>
            <person name="Chiba Y."/>
            <person name="Ishida S."/>
            <person name="Ono Y."/>
            <person name="Takiguchi S."/>
            <person name="Watanabe S."/>
            <person name="Yosida M."/>
            <person name="Hotuta T."/>
            <person name="Kusano J."/>
            <person name="Kanehori K."/>
            <person name="Takahashi-Fujii A."/>
            <person name="Hara H."/>
            <person name="Tanase T.-O."/>
            <person name="Nomura Y."/>
            <person name="Togiya S."/>
            <person name="Komai F."/>
            <person name="Hara R."/>
            <person name="Takeuchi K."/>
            <person name="Arita M."/>
            <person name="Imose N."/>
            <person name="Musashino K."/>
            <person name="Yuuki H."/>
            <person name="Oshima A."/>
            <person name="Sasaki N."/>
            <person name="Aotsuka S."/>
            <person name="Yoshikawa Y."/>
            <person name="Matsunawa H."/>
            <person name="Ichihara T."/>
            <person name="Shiohata N."/>
            <person name="Sano S."/>
            <person name="Moriya S."/>
            <person name="Momiyama H."/>
            <person name="Satoh N."/>
            <person name="Takami S."/>
            <person name="Terashima Y."/>
            <person name="Suzuki O."/>
            <person name="Nakagawa S."/>
            <person name="Senoh A."/>
            <person name="Mizoguchi H."/>
            <person name="Goto Y."/>
            <person name="Shimizu F."/>
            <person name="Wakebe H."/>
            <person name="Hishigaki H."/>
            <person name="Watanabe T."/>
            <person name="Sugiyama A."/>
            <person name="Takemoto M."/>
            <person name="Kawakami B."/>
            <person name="Yamazaki M."/>
            <person name="Watanabe K."/>
            <person name="Kumagai A."/>
            <person name="Itakura S."/>
            <person name="Fukuzumi Y."/>
            <person name="Fujimori Y."/>
            <person name="Komiyama M."/>
            <person name="Tashiro H."/>
            <person name="Tanigami A."/>
            <person name="Fujiwara T."/>
            <person name="Ono T."/>
            <person name="Yamada K."/>
            <person name="Fujii Y."/>
            <person name="Ozaki K."/>
            <person name="Hirao M."/>
            <person name="Ohmori Y."/>
            <person name="Kawabata A."/>
            <person name="Hikiji T."/>
            <person name="Kobatake N."/>
            <person name="Inagaki H."/>
            <person name="Ikema Y."/>
            <person name="Okamoto S."/>
            <person name="Okitani R."/>
            <person name="Kawakami T."/>
            <person name="Noguchi S."/>
            <person name="Itoh T."/>
            <person name="Shigeta K."/>
            <person name="Senba T."/>
            <person name="Matsumura K."/>
            <person name="Nakajima Y."/>
            <person name="Mizuno T."/>
            <person name="Morinaga M."/>
            <person name="Sasaki M."/>
            <person name="Togashi T."/>
            <person name="Oyama M."/>
            <person name="Hata H."/>
            <person name="Watanabe M."/>
            <person name="Komatsu T."/>
            <person name="Mizushima-Sugano J."/>
            <person name="Satoh T."/>
            <person name="Shirai Y."/>
            <person name="Takahashi Y."/>
            <person name="Nakagawa K."/>
            <person name="Okumura K."/>
            <person name="Nagase T."/>
            <person name="Nomura N."/>
            <person name="Kikuchi H."/>
            <person name="Masuho Y."/>
            <person name="Yamashita R."/>
            <person name="Nakai K."/>
            <person name="Yada T."/>
            <person name="Nakamura Y."/>
            <person name="Ohara O."/>
            <person name="Isogai T."/>
            <person name="Sugano S."/>
        </authorList>
    </citation>
    <scope>NUCLEOTIDE SEQUENCE [LARGE SCALE MRNA]</scope>
    <source>
        <tissue>Heart</tissue>
    </source>
</reference>
<reference key="7">
    <citation type="journal article" date="2003" name="Science">
        <title>Human chromosome 7: DNA sequence and biology.</title>
        <authorList>
            <person name="Scherer S.W."/>
            <person name="Cheung J."/>
            <person name="MacDonald J.R."/>
            <person name="Osborne L.R."/>
            <person name="Nakabayashi K."/>
            <person name="Herbrick J.-A."/>
            <person name="Carson A.R."/>
            <person name="Parker-Katiraee L."/>
            <person name="Skaug J."/>
            <person name="Khaja R."/>
            <person name="Zhang J."/>
            <person name="Hudek A.K."/>
            <person name="Li M."/>
            <person name="Haddad M."/>
            <person name="Duggan G.E."/>
            <person name="Fernandez B.A."/>
            <person name="Kanematsu E."/>
            <person name="Gentles S."/>
            <person name="Christopoulos C.C."/>
            <person name="Choufani S."/>
            <person name="Kwasnicka D."/>
            <person name="Zheng X.H."/>
            <person name="Lai Z."/>
            <person name="Nusskern D.R."/>
            <person name="Zhang Q."/>
            <person name="Gu Z."/>
            <person name="Lu F."/>
            <person name="Zeesman S."/>
            <person name="Nowaczyk M.J."/>
            <person name="Teshima I."/>
            <person name="Chitayat D."/>
            <person name="Shuman C."/>
            <person name="Weksberg R."/>
            <person name="Zackai E.H."/>
            <person name="Grebe T.A."/>
            <person name="Cox S.R."/>
            <person name="Kirkpatrick S.J."/>
            <person name="Rahman N."/>
            <person name="Friedman J.M."/>
            <person name="Heng H.H.Q."/>
            <person name="Pelicci P.G."/>
            <person name="Lo-Coco F."/>
            <person name="Belloni E."/>
            <person name="Shaffer L.G."/>
            <person name="Pober B."/>
            <person name="Morton C.C."/>
            <person name="Gusella J.F."/>
            <person name="Bruns G.A.P."/>
            <person name="Korf B.R."/>
            <person name="Quade B.J."/>
            <person name="Ligon A.H."/>
            <person name="Ferguson H."/>
            <person name="Higgins A.W."/>
            <person name="Leach N.T."/>
            <person name="Herrick S.R."/>
            <person name="Lemyre E."/>
            <person name="Farra C.G."/>
            <person name="Kim H.-G."/>
            <person name="Summers A.M."/>
            <person name="Gripp K.W."/>
            <person name="Roberts W."/>
            <person name="Szatmari P."/>
            <person name="Winsor E.J.T."/>
            <person name="Grzeschik K.-H."/>
            <person name="Teebi A."/>
            <person name="Minassian B.A."/>
            <person name="Kere J."/>
            <person name="Armengol L."/>
            <person name="Pujana M.A."/>
            <person name="Estivill X."/>
            <person name="Wilson M.D."/>
            <person name="Koop B.F."/>
            <person name="Tosi S."/>
            <person name="Moore G.E."/>
            <person name="Boright A.P."/>
            <person name="Zlotorynski E."/>
            <person name="Kerem B."/>
            <person name="Kroisel P.M."/>
            <person name="Petek E."/>
            <person name="Oscier D.G."/>
            <person name="Mould S.J."/>
            <person name="Doehner H."/>
            <person name="Doehner K."/>
            <person name="Rommens J.M."/>
            <person name="Vincent J.B."/>
            <person name="Venter J.C."/>
            <person name="Li P.W."/>
            <person name="Mural R.J."/>
            <person name="Adams M.D."/>
            <person name="Tsui L.-C."/>
        </authorList>
    </citation>
    <scope>NUCLEOTIDE SEQUENCE [LARGE SCALE GENOMIC DNA]</scope>
</reference>
<reference key="8">
    <citation type="submission" date="2005-07" db="EMBL/GenBank/DDBJ databases">
        <authorList>
            <person name="Mural R.J."/>
            <person name="Istrail S."/>
            <person name="Sutton G."/>
            <person name="Florea L."/>
            <person name="Halpern A.L."/>
            <person name="Mobarry C.M."/>
            <person name="Lippert R."/>
            <person name="Walenz B."/>
            <person name="Shatkay H."/>
            <person name="Dew I."/>
            <person name="Miller J.R."/>
            <person name="Flanigan M.J."/>
            <person name="Edwards N.J."/>
            <person name="Bolanos R."/>
            <person name="Fasulo D."/>
            <person name="Halldorsson B.V."/>
            <person name="Hannenhalli S."/>
            <person name="Turner R."/>
            <person name="Yooseph S."/>
            <person name="Lu F."/>
            <person name="Nusskern D.R."/>
            <person name="Shue B.C."/>
            <person name="Zheng X.H."/>
            <person name="Zhong F."/>
            <person name="Delcher A.L."/>
            <person name="Huson D.H."/>
            <person name="Kravitz S.A."/>
            <person name="Mouchard L."/>
            <person name="Reinert K."/>
            <person name="Remington K.A."/>
            <person name="Clark A.G."/>
            <person name="Waterman M.S."/>
            <person name="Eichler E.E."/>
            <person name="Adams M.D."/>
            <person name="Hunkapiller M.W."/>
            <person name="Myers E.W."/>
            <person name="Venter J.C."/>
        </authorList>
    </citation>
    <scope>NUCLEOTIDE SEQUENCE [LARGE SCALE GENOMIC DNA]</scope>
</reference>
<reference key="9">
    <citation type="journal article" date="2004" name="Genome Res.">
        <title>The status, quality, and expansion of the NIH full-length cDNA project: the Mammalian Gene Collection (MGC).</title>
        <authorList>
            <consortium name="The MGC Project Team"/>
        </authorList>
    </citation>
    <scope>NUCLEOTIDE SEQUENCE [LARGE SCALE MRNA]</scope>
    <source>
        <tissue>Colon</tissue>
    </source>
</reference>
<reference key="10">
    <citation type="journal article" date="1998" name="J. Biochem.">
        <title>Human erythrocyte bisphosphoglycerate mutase: inactivation by glycation in vivo and in vitro.</title>
        <authorList>
            <person name="Fujita T."/>
            <person name="Suzuki K."/>
            <person name="Tada T."/>
            <person name="Yoshihara Y."/>
            <person name="Hamaoka R."/>
            <person name="Uchida K."/>
            <person name="Matuo Y."/>
            <person name="Sasaki T."/>
            <person name="Hanafusa T."/>
            <person name="Taniguchi N."/>
        </authorList>
    </citation>
    <scope>PROTEIN SEQUENCE OF 2-46; 144-168 AND 182-206</scope>
    <scope>GLYCATION AT LYS-3; LYS-5; LYS-18; LYS-43; LYS-159 AND LYS-197</scope>
    <scope>LACK OF GLYCATION AT LYS-29; LYS-46; LYS-143; LYS-181; LYS-246; LYS-247; LYS-253; LYS-258 AND LYS-259</scope>
</reference>
<reference key="11">
    <citation type="journal article" date="1993" name="J. Biol. Chem.">
        <title>The platelet-activating factor acetylhydrolase from human erythrocytes. Purification and properties.</title>
        <authorList>
            <person name="Stafforini D.M."/>
            <person name="Rollins E.N."/>
            <person name="Prescott S.M."/>
            <person name="McIntyre T.M."/>
        </authorList>
    </citation>
    <scope>PROTEIN SEQUENCE OF 104-114</scope>
</reference>
<reference key="12">
    <citation type="journal article" date="1999" name="Biochem. J.">
        <title>Model of 2,3-bisphosphoglycerate metabolism in the human erythrocyte based on detailed enzyme kinetic equations: equations and parameter refinement.</title>
        <authorList>
            <person name="Mulquiney P.J."/>
            <person name="Kuchel P.W."/>
        </authorList>
    </citation>
    <scope>ACTIVITY REGULATION</scope>
</reference>
<reference key="13">
    <citation type="journal article" date="2006" name="Placenta">
        <title>Novel placental expression of 2,3-bisphosphoglycerate mutase.</title>
        <authorList>
            <person name="Pritlove D.C."/>
            <person name="Gu M."/>
            <person name="Boyd C.A."/>
            <person name="Randeva H.S."/>
            <person name="Vatish M."/>
        </authorList>
    </citation>
    <scope>TISSUE SPECIFICITY</scope>
</reference>
<reference key="14">
    <citation type="journal article" date="2011" name="BMC Syst. Biol.">
        <title>Initial characterization of the human central proteome.</title>
        <authorList>
            <person name="Burkard T.R."/>
            <person name="Planyavsky M."/>
            <person name="Kaupe I."/>
            <person name="Breitwieser F.P."/>
            <person name="Buerckstuemmer T."/>
            <person name="Bennett K.L."/>
            <person name="Superti-Furga G."/>
            <person name="Colinge J."/>
        </authorList>
    </citation>
    <scope>IDENTIFICATION BY MASS SPECTROMETRY [LARGE SCALE ANALYSIS]</scope>
</reference>
<reference key="15">
    <citation type="journal article" date="2012" name="Proc. Natl. Acad. Sci. U.S.A.">
        <title>N-terminal acetylome analyses and functional insights of the N-terminal acetyltransferase NatB.</title>
        <authorList>
            <person name="Van Damme P."/>
            <person name="Lasa M."/>
            <person name="Polevoda B."/>
            <person name="Gazquez C."/>
            <person name="Elosegui-Artola A."/>
            <person name="Kim D.S."/>
            <person name="De Juan-Pardo E."/>
            <person name="Demeyer K."/>
            <person name="Hole K."/>
            <person name="Larrea E."/>
            <person name="Timmerman E."/>
            <person name="Prieto J."/>
            <person name="Arnesen T."/>
            <person name="Sherman F."/>
            <person name="Gevaert K."/>
            <person name="Aldabe R."/>
        </authorList>
    </citation>
    <scope>ACETYLATION [LARGE SCALE ANALYSIS] AT SER-2</scope>
    <scope>CLEAVAGE OF INITIATOR METHIONINE [LARGE SCALE ANALYSIS]</scope>
    <scope>IDENTIFICATION BY MASS SPECTROMETRY [LARGE SCALE ANALYSIS]</scope>
</reference>
<reference key="16">
    <citation type="journal article" date="2014" name="J. Proteomics">
        <title>An enzyme assisted RP-RPLC approach for in-depth analysis of human liver phosphoproteome.</title>
        <authorList>
            <person name="Bian Y."/>
            <person name="Song C."/>
            <person name="Cheng K."/>
            <person name="Dong M."/>
            <person name="Wang F."/>
            <person name="Huang J."/>
            <person name="Sun D."/>
            <person name="Wang L."/>
            <person name="Ye M."/>
            <person name="Zou H."/>
        </authorList>
    </citation>
    <scope>PHOSPHORYLATION [LARGE SCALE ANALYSIS] AT THR-122</scope>
    <scope>IDENTIFICATION BY MASS SPECTROMETRY [LARGE SCALE ANALYSIS]</scope>
    <source>
        <tissue>Liver</tissue>
    </source>
</reference>
<reference key="17">
    <citation type="journal article" date="1992" name="Biochimie">
        <title>Structural modeling of the human erythrocyte bisphosphoglycerate mutase.</title>
        <authorList>
            <person name="Craescu C.T."/>
            <person name="Schaad O."/>
            <person name="Garel M.-C."/>
            <person name="Rosa R."/>
            <person name="Edelstein S.J."/>
        </authorList>
    </citation>
    <scope>3D-STRUCTURE MODELING</scope>
</reference>
<reference key="18">
    <citation type="journal article" date="2004" name="J. Biol. Chem.">
        <title>Crystal structure of human bisphosphoglycerate mutase.</title>
        <authorList>
            <person name="Wang Y."/>
            <person name="Wei Z."/>
            <person name="Bian Q."/>
            <person name="Cheng Z."/>
            <person name="Wan M."/>
            <person name="Liu L."/>
            <person name="Gong W."/>
        </authorList>
    </citation>
    <scope>X-RAY CRYSTALLOGRAPHY (2.50 ANGSTROMS) OF 1-259</scope>
    <scope>SUBUNIT</scope>
</reference>
<reference key="19">
    <citation type="journal article" date="2006" name="J. Biol. Chem.">
        <title>Seeing the process of histidine phosphorylation in human bisphosphoglycerate mutase.</title>
        <authorList>
            <person name="Wang Y."/>
            <person name="Liu L."/>
            <person name="Wei Z."/>
            <person name="Cheng Z."/>
            <person name="Lin Y."/>
            <person name="Gong W."/>
        </authorList>
    </citation>
    <scope>X-RAY CRYSTALLOGRAPHY (1.5 ANGSTROMS) OF 1-258 IN COMPLEXES WITH 3-PHOSPHO-D-GLYCERATE AND 2,3-BISPHOSPHO-D-GLYCERATE</scope>
    <scope>SUBUNIT</scope>
    <scope>ACTIVE SITE</scope>
</reference>
<reference key="20">
    <citation type="journal article" date="2010" name="Acta Crystallogr. F">
        <title>Unliganded structure of human bisphosphoglycerate mutase reveals side-chain movements induced by ligand binding.</title>
        <authorList>
            <person name="Patterson A."/>
            <person name="Price N.C."/>
            <person name="Nairn J."/>
        </authorList>
    </citation>
    <scope>X-RAY CRYSTALLOGRAPHY (1.94 ANGSTROMS)</scope>
    <scope>FUNCTION</scope>
    <scope>CATALYTIC ACTIVITY</scope>
    <scope>ACTIVITY REGULATION</scope>
</reference>
<reference key="21">
    <citation type="journal article" date="1992" name="Blood">
        <title>Compound heterozygosity in a complete erythrocyte bisphosphoglycerate mutase deficiency.</title>
        <authorList>
            <person name="Lemarchandel V."/>
            <person name="Joulin V."/>
            <person name="Valentin C."/>
            <person name="Rosa R."/>
            <person name="Galacteros F."/>
            <person name="Rosa J."/>
            <person name="Cohen-Solal M."/>
        </authorList>
    </citation>
    <scope>VARIANT ECYT8 CYS-90</scope>
</reference>
<reference key="22">
    <citation type="journal article" date="2004" name="Am. J. Hematol.">
        <title>Erythrocytosis due to bisphosphoglycerate mutase deficiency with concurrent glucose-6-phosphate dehydrogenase (G-6-PD) deficiency.</title>
        <authorList>
            <person name="Hoyer J.D."/>
            <person name="Allen S.L."/>
            <person name="Beutler E."/>
            <person name="Kubik K."/>
            <person name="West C."/>
            <person name="Fairbanks V.F."/>
        </authorList>
    </citation>
    <scope>VARIANT ECYT8 GLN-62</scope>
</reference>
<keyword id="KW-0002">3D-structure</keyword>
<keyword id="KW-0007">Acetylation</keyword>
<keyword id="KW-0985">Congenital erythrocytosis</keyword>
<keyword id="KW-0903">Direct protein sequencing</keyword>
<keyword id="KW-0225">Disease variant</keyword>
<keyword id="KW-0971">Glycation</keyword>
<keyword id="KW-0324">Glycolysis</keyword>
<keyword id="KW-0325">Glycoprotein</keyword>
<keyword id="KW-0360">Hereditary hemolytic anemia</keyword>
<keyword id="KW-0378">Hydrolase</keyword>
<keyword id="KW-0413">Isomerase</keyword>
<keyword id="KW-0597">Phosphoprotein</keyword>
<keyword id="KW-1267">Proteomics identification</keyword>
<keyword id="KW-1185">Reference proteome</keyword>
<sequence length="259" mass="30005">MSKYKLIMLRHGEGAWNKENRFCSWVDQKLNSEGMEEARNCGKQLKALNFEFDLVFTSVLNRSIHTAWLILEELGQEWVPVESSWRLNERHYGALIGLNREQMALNHGEEQVRLWRRSYNVTPPPIEESHPYYQEIYNDRRYKVCDVPLDQLPRSESLKDVLERLLPYWNERIAPEVLRGKTILISAHGNSSRALLKHLEGISDEDIINITLPTGVPILLELDENLRAVGPHQFLGDQEAIQAAIKKVEDQGKVKQAKK</sequence>
<proteinExistence type="evidence at protein level"/>